<dbReference type="EC" id="6.3.4.4" evidence="1"/>
<dbReference type="EMBL" id="CP000749">
    <property type="protein sequence ID" value="ABR71539.1"/>
    <property type="status" value="ALT_INIT"/>
    <property type="molecule type" value="Genomic_DNA"/>
</dbReference>
<dbReference type="SMR" id="A6VYL0"/>
<dbReference type="STRING" id="400668.Mmwyl1_2626"/>
<dbReference type="KEGG" id="mmw:Mmwyl1_2626"/>
<dbReference type="eggNOG" id="COG0104">
    <property type="taxonomic scope" value="Bacteria"/>
</dbReference>
<dbReference type="HOGENOM" id="CLU_029848_0_0_6"/>
<dbReference type="OrthoDB" id="9807553at2"/>
<dbReference type="UniPathway" id="UPA00075">
    <property type="reaction ID" value="UER00335"/>
</dbReference>
<dbReference type="GO" id="GO:0005737">
    <property type="term" value="C:cytoplasm"/>
    <property type="evidence" value="ECO:0007669"/>
    <property type="project" value="UniProtKB-SubCell"/>
</dbReference>
<dbReference type="GO" id="GO:0004019">
    <property type="term" value="F:adenylosuccinate synthase activity"/>
    <property type="evidence" value="ECO:0007669"/>
    <property type="project" value="UniProtKB-UniRule"/>
</dbReference>
<dbReference type="GO" id="GO:0005525">
    <property type="term" value="F:GTP binding"/>
    <property type="evidence" value="ECO:0007669"/>
    <property type="project" value="UniProtKB-UniRule"/>
</dbReference>
<dbReference type="GO" id="GO:0000287">
    <property type="term" value="F:magnesium ion binding"/>
    <property type="evidence" value="ECO:0007669"/>
    <property type="project" value="UniProtKB-UniRule"/>
</dbReference>
<dbReference type="GO" id="GO:0044208">
    <property type="term" value="P:'de novo' AMP biosynthetic process"/>
    <property type="evidence" value="ECO:0007669"/>
    <property type="project" value="UniProtKB-UniRule"/>
</dbReference>
<dbReference type="GO" id="GO:0046040">
    <property type="term" value="P:IMP metabolic process"/>
    <property type="evidence" value="ECO:0007669"/>
    <property type="project" value="TreeGrafter"/>
</dbReference>
<dbReference type="CDD" id="cd03108">
    <property type="entry name" value="AdSS"/>
    <property type="match status" value="1"/>
</dbReference>
<dbReference type="FunFam" id="1.10.300.10:FF:000001">
    <property type="entry name" value="Adenylosuccinate synthetase"/>
    <property type="match status" value="1"/>
</dbReference>
<dbReference type="FunFam" id="3.90.170.10:FF:000001">
    <property type="entry name" value="Adenylosuccinate synthetase"/>
    <property type="match status" value="1"/>
</dbReference>
<dbReference type="Gene3D" id="3.40.440.10">
    <property type="entry name" value="Adenylosuccinate Synthetase, subunit A, domain 1"/>
    <property type="match status" value="1"/>
</dbReference>
<dbReference type="Gene3D" id="1.10.300.10">
    <property type="entry name" value="Adenylosuccinate Synthetase, subunit A, domain 2"/>
    <property type="match status" value="1"/>
</dbReference>
<dbReference type="Gene3D" id="3.90.170.10">
    <property type="entry name" value="Adenylosuccinate Synthetase, subunit A, domain 3"/>
    <property type="match status" value="1"/>
</dbReference>
<dbReference type="HAMAP" id="MF_00011">
    <property type="entry name" value="Adenylosucc_synth"/>
    <property type="match status" value="1"/>
</dbReference>
<dbReference type="InterPro" id="IPR018220">
    <property type="entry name" value="Adenylosuccin_syn_GTP-bd"/>
</dbReference>
<dbReference type="InterPro" id="IPR033128">
    <property type="entry name" value="Adenylosuccin_syn_Lys_AS"/>
</dbReference>
<dbReference type="InterPro" id="IPR042109">
    <property type="entry name" value="Adenylosuccinate_synth_dom1"/>
</dbReference>
<dbReference type="InterPro" id="IPR042110">
    <property type="entry name" value="Adenylosuccinate_synth_dom2"/>
</dbReference>
<dbReference type="InterPro" id="IPR042111">
    <property type="entry name" value="Adenylosuccinate_synth_dom3"/>
</dbReference>
<dbReference type="InterPro" id="IPR001114">
    <property type="entry name" value="Adenylosuccinate_synthetase"/>
</dbReference>
<dbReference type="InterPro" id="IPR027417">
    <property type="entry name" value="P-loop_NTPase"/>
</dbReference>
<dbReference type="NCBIfam" id="NF002223">
    <property type="entry name" value="PRK01117.1"/>
    <property type="match status" value="1"/>
</dbReference>
<dbReference type="NCBIfam" id="TIGR00184">
    <property type="entry name" value="purA"/>
    <property type="match status" value="1"/>
</dbReference>
<dbReference type="PANTHER" id="PTHR11846">
    <property type="entry name" value="ADENYLOSUCCINATE SYNTHETASE"/>
    <property type="match status" value="1"/>
</dbReference>
<dbReference type="PANTHER" id="PTHR11846:SF0">
    <property type="entry name" value="ADENYLOSUCCINATE SYNTHETASE"/>
    <property type="match status" value="1"/>
</dbReference>
<dbReference type="Pfam" id="PF00709">
    <property type="entry name" value="Adenylsucc_synt"/>
    <property type="match status" value="1"/>
</dbReference>
<dbReference type="SMART" id="SM00788">
    <property type="entry name" value="Adenylsucc_synt"/>
    <property type="match status" value="1"/>
</dbReference>
<dbReference type="SUPFAM" id="SSF52540">
    <property type="entry name" value="P-loop containing nucleoside triphosphate hydrolases"/>
    <property type="match status" value="1"/>
</dbReference>
<dbReference type="PROSITE" id="PS01266">
    <property type="entry name" value="ADENYLOSUCCIN_SYN_1"/>
    <property type="match status" value="1"/>
</dbReference>
<dbReference type="PROSITE" id="PS00513">
    <property type="entry name" value="ADENYLOSUCCIN_SYN_2"/>
    <property type="match status" value="1"/>
</dbReference>
<name>PURA_MARMS</name>
<organism>
    <name type="scientific">Marinomonas sp. (strain MWYL1)</name>
    <dbReference type="NCBI Taxonomy" id="400668"/>
    <lineage>
        <taxon>Bacteria</taxon>
        <taxon>Pseudomonadati</taxon>
        <taxon>Pseudomonadota</taxon>
        <taxon>Gammaproteobacteria</taxon>
        <taxon>Oceanospirillales</taxon>
        <taxon>Oceanospirillaceae</taxon>
        <taxon>Marinomonas</taxon>
    </lineage>
</organism>
<sequence length="432" mass="46703">MGKNVVILGTQWGDEGKGKVVDLLTEDVAAVVRFQGGHNAGHTLVIDGKKTVLHLIPSGILREGVQCIIGNGVVLSPAALKAEVLELLEQGVPAVDRLKISAACPLILPYHIAIDQARELARGEKKIGTTGRGIGPAYEDKVARRAIRVGDLLDSERFASKLKEVLEYYNFVLTQYHKVEPISFDEVYTAGLEMAEFLRPMVADTITLLHDLRKAGANIMFEGAQGSLLDVDHGTYPYVTSSNTTAGGAPAGTGFGPLYLDYVLGITKAYTTRVGSGPFPTELFDEDGERLGRRGHEFGATTGRSRRCGWFDSVALRHAVQINSVSGICLTKLDVLDGSSVIKVCVSYADENGNPVAGSLVDSEGYEKARPVYVELPGWTESTVGAENFEALPKNAQDYIRFLEEQVGVPVDIISTGPDRNETIVIRDPFKQ</sequence>
<feature type="chain" id="PRO_0000337003" description="Adenylosuccinate synthetase">
    <location>
        <begin position="1"/>
        <end position="432"/>
    </location>
</feature>
<feature type="active site" description="Proton acceptor" evidence="1">
    <location>
        <position position="14"/>
    </location>
</feature>
<feature type="active site" description="Proton donor" evidence="1">
    <location>
        <position position="42"/>
    </location>
</feature>
<feature type="binding site" evidence="1">
    <location>
        <begin position="13"/>
        <end position="19"/>
    </location>
    <ligand>
        <name>GTP</name>
        <dbReference type="ChEBI" id="CHEBI:37565"/>
    </ligand>
</feature>
<feature type="binding site" description="in other chain" evidence="1">
    <location>
        <begin position="14"/>
        <end position="17"/>
    </location>
    <ligand>
        <name>IMP</name>
        <dbReference type="ChEBI" id="CHEBI:58053"/>
        <note>ligand shared between dimeric partners</note>
    </ligand>
</feature>
<feature type="binding site" evidence="1">
    <location>
        <position position="14"/>
    </location>
    <ligand>
        <name>Mg(2+)</name>
        <dbReference type="ChEBI" id="CHEBI:18420"/>
    </ligand>
</feature>
<feature type="binding site" description="in other chain" evidence="1">
    <location>
        <begin position="39"/>
        <end position="42"/>
    </location>
    <ligand>
        <name>IMP</name>
        <dbReference type="ChEBI" id="CHEBI:58053"/>
        <note>ligand shared between dimeric partners</note>
    </ligand>
</feature>
<feature type="binding site" evidence="1">
    <location>
        <begin position="41"/>
        <end position="43"/>
    </location>
    <ligand>
        <name>GTP</name>
        <dbReference type="ChEBI" id="CHEBI:37565"/>
    </ligand>
</feature>
<feature type="binding site" evidence="1">
    <location>
        <position position="41"/>
    </location>
    <ligand>
        <name>Mg(2+)</name>
        <dbReference type="ChEBI" id="CHEBI:18420"/>
    </ligand>
</feature>
<feature type="binding site" description="in other chain" evidence="1">
    <location>
        <position position="130"/>
    </location>
    <ligand>
        <name>IMP</name>
        <dbReference type="ChEBI" id="CHEBI:58053"/>
        <note>ligand shared between dimeric partners</note>
    </ligand>
</feature>
<feature type="binding site" evidence="1">
    <location>
        <position position="144"/>
    </location>
    <ligand>
        <name>IMP</name>
        <dbReference type="ChEBI" id="CHEBI:58053"/>
        <note>ligand shared between dimeric partners</note>
    </ligand>
</feature>
<feature type="binding site" description="in other chain" evidence="1">
    <location>
        <position position="225"/>
    </location>
    <ligand>
        <name>IMP</name>
        <dbReference type="ChEBI" id="CHEBI:58053"/>
        <note>ligand shared between dimeric partners</note>
    </ligand>
</feature>
<feature type="binding site" description="in other chain" evidence="1">
    <location>
        <position position="240"/>
    </location>
    <ligand>
        <name>IMP</name>
        <dbReference type="ChEBI" id="CHEBI:58053"/>
        <note>ligand shared between dimeric partners</note>
    </ligand>
</feature>
<feature type="binding site" evidence="1">
    <location>
        <begin position="300"/>
        <end position="306"/>
    </location>
    <ligand>
        <name>substrate</name>
    </ligand>
</feature>
<feature type="binding site" description="in other chain" evidence="1">
    <location>
        <position position="304"/>
    </location>
    <ligand>
        <name>IMP</name>
        <dbReference type="ChEBI" id="CHEBI:58053"/>
        <note>ligand shared between dimeric partners</note>
    </ligand>
</feature>
<feature type="binding site" evidence="1">
    <location>
        <position position="306"/>
    </location>
    <ligand>
        <name>GTP</name>
        <dbReference type="ChEBI" id="CHEBI:37565"/>
    </ligand>
</feature>
<feature type="binding site" evidence="1">
    <location>
        <begin position="332"/>
        <end position="334"/>
    </location>
    <ligand>
        <name>GTP</name>
        <dbReference type="ChEBI" id="CHEBI:37565"/>
    </ligand>
</feature>
<feature type="binding site" evidence="1">
    <location>
        <begin position="415"/>
        <end position="417"/>
    </location>
    <ligand>
        <name>GTP</name>
        <dbReference type="ChEBI" id="CHEBI:37565"/>
    </ligand>
</feature>
<evidence type="ECO:0000255" key="1">
    <source>
        <dbReference type="HAMAP-Rule" id="MF_00011"/>
    </source>
</evidence>
<evidence type="ECO:0000305" key="2"/>
<gene>
    <name evidence="1" type="primary">purA</name>
    <name type="ordered locus">Mmwyl1_2626</name>
</gene>
<keyword id="KW-0963">Cytoplasm</keyword>
<keyword id="KW-0342">GTP-binding</keyword>
<keyword id="KW-0436">Ligase</keyword>
<keyword id="KW-0460">Magnesium</keyword>
<keyword id="KW-0479">Metal-binding</keyword>
<keyword id="KW-0547">Nucleotide-binding</keyword>
<keyword id="KW-0658">Purine biosynthesis</keyword>
<comment type="function">
    <text evidence="1">Plays an important role in the de novo pathway of purine nucleotide biosynthesis. Catalyzes the first committed step in the biosynthesis of AMP from IMP.</text>
</comment>
<comment type="catalytic activity">
    <reaction evidence="1">
        <text>IMP + L-aspartate + GTP = N(6)-(1,2-dicarboxyethyl)-AMP + GDP + phosphate + 2 H(+)</text>
        <dbReference type="Rhea" id="RHEA:15753"/>
        <dbReference type="ChEBI" id="CHEBI:15378"/>
        <dbReference type="ChEBI" id="CHEBI:29991"/>
        <dbReference type="ChEBI" id="CHEBI:37565"/>
        <dbReference type="ChEBI" id="CHEBI:43474"/>
        <dbReference type="ChEBI" id="CHEBI:57567"/>
        <dbReference type="ChEBI" id="CHEBI:58053"/>
        <dbReference type="ChEBI" id="CHEBI:58189"/>
        <dbReference type="EC" id="6.3.4.4"/>
    </reaction>
</comment>
<comment type="cofactor">
    <cofactor evidence="1">
        <name>Mg(2+)</name>
        <dbReference type="ChEBI" id="CHEBI:18420"/>
    </cofactor>
    <text evidence="1">Binds 1 Mg(2+) ion per subunit.</text>
</comment>
<comment type="pathway">
    <text evidence="1">Purine metabolism; AMP biosynthesis via de novo pathway; AMP from IMP: step 1/2.</text>
</comment>
<comment type="subunit">
    <text evidence="1">Homodimer.</text>
</comment>
<comment type="subcellular location">
    <subcellularLocation>
        <location evidence="1">Cytoplasm</location>
    </subcellularLocation>
</comment>
<comment type="similarity">
    <text evidence="1">Belongs to the adenylosuccinate synthetase family.</text>
</comment>
<comment type="sequence caution" evidence="2">
    <conflict type="erroneous initiation">
        <sequence resource="EMBL-CDS" id="ABR71539"/>
    </conflict>
</comment>
<accession>A6VYL0</accession>
<protein>
    <recommendedName>
        <fullName evidence="1">Adenylosuccinate synthetase</fullName>
        <shortName evidence="1">AMPSase</shortName>
        <shortName evidence="1">AdSS</shortName>
        <ecNumber evidence="1">6.3.4.4</ecNumber>
    </recommendedName>
    <alternativeName>
        <fullName evidence="1">IMP--aspartate ligase</fullName>
    </alternativeName>
</protein>
<reference key="1">
    <citation type="submission" date="2007-06" db="EMBL/GenBank/DDBJ databases">
        <title>Complete sequence of Marinomonas sp. MWYL1.</title>
        <authorList>
            <consortium name="US DOE Joint Genome Institute"/>
            <person name="Copeland A."/>
            <person name="Lucas S."/>
            <person name="Lapidus A."/>
            <person name="Barry K."/>
            <person name="Glavina del Rio T."/>
            <person name="Dalin E."/>
            <person name="Tice H."/>
            <person name="Pitluck S."/>
            <person name="Kiss H."/>
            <person name="Brettin T."/>
            <person name="Bruce D."/>
            <person name="Detter J.C."/>
            <person name="Han C."/>
            <person name="Schmutz J."/>
            <person name="Larimer F."/>
            <person name="Land M."/>
            <person name="Hauser L."/>
            <person name="Kyrpides N."/>
            <person name="Kim E."/>
            <person name="Johnston A.W.B."/>
            <person name="Todd J.D."/>
            <person name="Rogers R."/>
            <person name="Wexler M."/>
            <person name="Bond P.L."/>
            <person name="Li Y."/>
            <person name="Richardson P."/>
        </authorList>
    </citation>
    <scope>NUCLEOTIDE SEQUENCE [LARGE SCALE GENOMIC DNA]</scope>
    <source>
        <strain>MWYL1</strain>
    </source>
</reference>
<proteinExistence type="inferred from homology"/>